<comment type="function">
    <text evidence="1">Specifically dimethylates two adjacent adenosines in the loop of a conserved hairpin near the 3'-end of 16S rRNA in the 30S particle. May play a critical role in biogenesis of 30S subunits.</text>
</comment>
<comment type="subcellular location">
    <subcellularLocation>
        <location evidence="1">Cytoplasm</location>
    </subcellularLocation>
</comment>
<comment type="similarity">
    <text evidence="1">Belongs to the class I-like SAM-binding methyltransferase superfamily. rRNA adenine N(6)-methyltransferase family. RsmA subfamily.</text>
</comment>
<name>RSMA_METM5</name>
<proteinExistence type="inferred from homology"/>
<organism>
    <name type="scientific">Methanococcus maripaludis (strain C5 / ATCC BAA-1333)</name>
    <dbReference type="NCBI Taxonomy" id="402880"/>
    <lineage>
        <taxon>Archaea</taxon>
        <taxon>Methanobacteriati</taxon>
        <taxon>Methanobacteriota</taxon>
        <taxon>Methanomada group</taxon>
        <taxon>Methanococci</taxon>
        <taxon>Methanococcales</taxon>
        <taxon>Methanococcaceae</taxon>
        <taxon>Methanococcus</taxon>
    </lineage>
</organism>
<feature type="chain" id="PRO_1000056635" description="Probable ribosomal RNA small subunit methyltransferase A">
    <location>
        <begin position="1"/>
        <end position="263"/>
    </location>
</feature>
<feature type="binding site" evidence="1">
    <location>
        <position position="12"/>
    </location>
    <ligand>
        <name>S-adenosyl-L-methionine</name>
        <dbReference type="ChEBI" id="CHEBI:59789"/>
    </ligand>
</feature>
<feature type="binding site" evidence="1">
    <location>
        <position position="37"/>
    </location>
    <ligand>
        <name>S-adenosyl-L-methionine</name>
        <dbReference type="ChEBI" id="CHEBI:59789"/>
    </ligand>
</feature>
<feature type="binding site" evidence="1">
    <location>
        <position position="58"/>
    </location>
    <ligand>
        <name>S-adenosyl-L-methionine</name>
        <dbReference type="ChEBI" id="CHEBI:59789"/>
    </ligand>
</feature>
<feature type="binding site" evidence="1">
    <location>
        <position position="83"/>
    </location>
    <ligand>
        <name>S-adenosyl-L-methionine</name>
        <dbReference type="ChEBI" id="CHEBI:59789"/>
    </ligand>
</feature>
<feature type="binding site" evidence="1">
    <location>
        <position position="100"/>
    </location>
    <ligand>
        <name>S-adenosyl-L-methionine</name>
        <dbReference type="ChEBI" id="CHEBI:59789"/>
    </ligand>
</feature>
<dbReference type="EC" id="2.1.1.-" evidence="1"/>
<dbReference type="EMBL" id="CP000609">
    <property type="protein sequence ID" value="ABO35116.1"/>
    <property type="molecule type" value="Genomic_DNA"/>
</dbReference>
<dbReference type="RefSeq" id="WP_011868570.1">
    <property type="nucleotide sequence ID" value="NC_009135.1"/>
</dbReference>
<dbReference type="SMR" id="A4FY32"/>
<dbReference type="STRING" id="402880.MmarC5_0806"/>
<dbReference type="GeneID" id="4927764"/>
<dbReference type="KEGG" id="mmq:MmarC5_0806"/>
<dbReference type="eggNOG" id="arCOG04131">
    <property type="taxonomic scope" value="Archaea"/>
</dbReference>
<dbReference type="HOGENOM" id="CLU_041220_0_2_2"/>
<dbReference type="OrthoDB" id="9883at2157"/>
<dbReference type="Proteomes" id="UP000000253">
    <property type="component" value="Chromosome"/>
</dbReference>
<dbReference type="GO" id="GO:0005737">
    <property type="term" value="C:cytoplasm"/>
    <property type="evidence" value="ECO:0007669"/>
    <property type="project" value="UniProtKB-SubCell"/>
</dbReference>
<dbReference type="GO" id="GO:0003723">
    <property type="term" value="F:RNA binding"/>
    <property type="evidence" value="ECO:0007669"/>
    <property type="project" value="UniProtKB-KW"/>
</dbReference>
<dbReference type="GO" id="GO:0000179">
    <property type="term" value="F:rRNA (adenine-N6,N6-)-dimethyltransferase activity"/>
    <property type="evidence" value="ECO:0007669"/>
    <property type="project" value="InterPro"/>
</dbReference>
<dbReference type="CDD" id="cd02440">
    <property type="entry name" value="AdoMet_MTases"/>
    <property type="match status" value="1"/>
</dbReference>
<dbReference type="FunFam" id="3.40.50.150:FF:000023">
    <property type="entry name" value="Ribosomal RNA small subunit methyltransferase A"/>
    <property type="match status" value="1"/>
</dbReference>
<dbReference type="Gene3D" id="1.10.8.100">
    <property type="entry name" value="Ribosomal RNA adenine dimethylase-like, domain 2"/>
    <property type="match status" value="1"/>
</dbReference>
<dbReference type="Gene3D" id="3.40.50.150">
    <property type="entry name" value="Vaccinia Virus protein VP39"/>
    <property type="match status" value="1"/>
</dbReference>
<dbReference type="HAMAP" id="MF_00607">
    <property type="entry name" value="16SrRNA_methyltr_A"/>
    <property type="match status" value="1"/>
</dbReference>
<dbReference type="InterPro" id="IPR001737">
    <property type="entry name" value="KsgA/Erm"/>
</dbReference>
<dbReference type="InterPro" id="IPR023165">
    <property type="entry name" value="rRNA_Ade_diMease-like_C"/>
</dbReference>
<dbReference type="InterPro" id="IPR020596">
    <property type="entry name" value="rRNA_Ade_Mease_Trfase_CS"/>
</dbReference>
<dbReference type="InterPro" id="IPR020598">
    <property type="entry name" value="rRNA_Ade_methylase_Trfase_N"/>
</dbReference>
<dbReference type="InterPro" id="IPR011530">
    <property type="entry name" value="rRNA_adenine_dimethylase"/>
</dbReference>
<dbReference type="InterPro" id="IPR029063">
    <property type="entry name" value="SAM-dependent_MTases_sf"/>
</dbReference>
<dbReference type="NCBIfam" id="TIGR00755">
    <property type="entry name" value="ksgA"/>
    <property type="match status" value="1"/>
</dbReference>
<dbReference type="PANTHER" id="PTHR11727">
    <property type="entry name" value="DIMETHYLADENOSINE TRANSFERASE"/>
    <property type="match status" value="1"/>
</dbReference>
<dbReference type="PANTHER" id="PTHR11727:SF7">
    <property type="entry name" value="DIMETHYLADENOSINE TRANSFERASE-RELATED"/>
    <property type="match status" value="1"/>
</dbReference>
<dbReference type="Pfam" id="PF00398">
    <property type="entry name" value="RrnaAD"/>
    <property type="match status" value="1"/>
</dbReference>
<dbReference type="SMART" id="SM00650">
    <property type="entry name" value="rADc"/>
    <property type="match status" value="1"/>
</dbReference>
<dbReference type="SUPFAM" id="SSF53335">
    <property type="entry name" value="S-adenosyl-L-methionine-dependent methyltransferases"/>
    <property type="match status" value="1"/>
</dbReference>
<dbReference type="PROSITE" id="PS01131">
    <property type="entry name" value="RRNA_A_DIMETH"/>
    <property type="match status" value="1"/>
</dbReference>
<dbReference type="PROSITE" id="PS51689">
    <property type="entry name" value="SAM_RNA_A_N6_MT"/>
    <property type="match status" value="1"/>
</dbReference>
<protein>
    <recommendedName>
        <fullName evidence="1">Probable ribosomal RNA small subunit methyltransferase A</fullName>
        <ecNumber evidence="1">2.1.1.-</ecNumber>
    </recommendedName>
    <alternativeName>
        <fullName evidence="1">16S rRNA dimethyladenosine transferase</fullName>
    </alternativeName>
    <alternativeName>
        <fullName evidence="1">16S rRNA dimethylase</fullName>
    </alternativeName>
    <alternativeName>
        <fullName evidence="1">S-adenosylmethionine-6-N',N'-adenosyl(rRNA) dimethyltransferase</fullName>
    </alternativeName>
</protein>
<keyword id="KW-0963">Cytoplasm</keyword>
<keyword id="KW-0489">Methyltransferase</keyword>
<keyword id="KW-0694">RNA-binding</keyword>
<keyword id="KW-0698">rRNA processing</keyword>
<keyword id="KW-0949">S-adenosyl-L-methionine</keyword>
<keyword id="KW-0808">Transferase</keyword>
<evidence type="ECO:0000255" key="1">
    <source>
        <dbReference type="HAMAP-Rule" id="MF_00607"/>
    </source>
</evidence>
<accession>A4FY32</accession>
<gene>
    <name evidence="1" type="primary">rsmA</name>
    <name evidence="1" type="synonym">ksgA</name>
    <name type="ordered locus">MmarC5_0806</name>
</gene>
<sequence length="263" mass="30456">MRQSKKLGQCFLKDKNFVKKAINRAEITNKDVVLELGLGEGALTKELAKIAKKVYVIELDERLKPFADEITSEFENVEIIWSDALKVDLKNLGFNKIVANLPYQISSPITFKFLDVDFETAVLMYQYEFAKRMAGKPDTKEYSRLSVAVQYNADVEFICKVPPSAFSPKPDVNSAIVKLTKREPKYFVKDEKFFKKVLKAMFQHRNRTIKRALIDSSHEIEIDRDNLKEILEKVESEFDFSERVFKTSPEKIGYLSNLLYDEI</sequence>
<reference key="1">
    <citation type="submission" date="2007-03" db="EMBL/GenBank/DDBJ databases">
        <title>Complete sequence of chromosome of Methanococcus maripaludis C5.</title>
        <authorList>
            <consortium name="US DOE Joint Genome Institute"/>
            <person name="Copeland A."/>
            <person name="Lucas S."/>
            <person name="Lapidus A."/>
            <person name="Barry K."/>
            <person name="Glavina del Rio T."/>
            <person name="Dalin E."/>
            <person name="Tice H."/>
            <person name="Pitluck S."/>
            <person name="Chertkov O."/>
            <person name="Brettin T."/>
            <person name="Bruce D."/>
            <person name="Han C."/>
            <person name="Detter J.C."/>
            <person name="Schmutz J."/>
            <person name="Larimer F."/>
            <person name="Land M."/>
            <person name="Hauser L."/>
            <person name="Kyrpides N."/>
            <person name="Mikhailova N."/>
            <person name="Sieprawska-Lupa M."/>
            <person name="Whitman W.B."/>
            <person name="Richardson P."/>
        </authorList>
    </citation>
    <scope>NUCLEOTIDE SEQUENCE [LARGE SCALE GENOMIC DNA]</scope>
    <source>
        <strain>C5 / ATCC BAA-1333</strain>
    </source>
</reference>